<organism>
    <name type="scientific">Varicella-zoster virus (strain Dumas)</name>
    <name type="common">HHV-3</name>
    <name type="synonym">Human herpesvirus 3</name>
    <dbReference type="NCBI Taxonomy" id="10338"/>
    <lineage>
        <taxon>Viruses</taxon>
        <taxon>Duplodnaviria</taxon>
        <taxon>Heunggongvirae</taxon>
        <taxon>Peploviricota</taxon>
        <taxon>Herviviricetes</taxon>
        <taxon>Herpesvirales</taxon>
        <taxon>Orthoherpesviridae</taxon>
        <taxon>Alphaherpesvirinae</taxon>
        <taxon>Varicellovirus</taxon>
        <taxon>Varicellovirus humanalpha3</taxon>
        <taxon>Human herpesvirus 3</taxon>
    </lineage>
</organism>
<protein>
    <recommendedName>
        <fullName evidence="1">Cytoplasmic envelopment protein 1</fullName>
    </recommendedName>
</protein>
<organismHost>
    <name type="scientific">Homo sapiens</name>
    <name type="common">Human</name>
    <dbReference type="NCBI Taxonomy" id="9606"/>
</organismHost>
<name>CEP1_VZVD</name>
<dbReference type="EMBL" id="X04370">
    <property type="protein sequence ID" value="CAA27936.1"/>
    <property type="molecule type" value="Genomic_DNA"/>
</dbReference>
<dbReference type="PIR" id="A27215">
    <property type="entry name" value="WZBE53"/>
</dbReference>
<dbReference type="SMR" id="P09301"/>
<dbReference type="Proteomes" id="UP000002602">
    <property type="component" value="Genome"/>
</dbReference>
<dbReference type="GO" id="GO:0044177">
    <property type="term" value="C:host cell Golgi apparatus"/>
    <property type="evidence" value="ECO:0007669"/>
    <property type="project" value="UniProtKB-SubCell"/>
</dbReference>
<dbReference type="GO" id="GO:0019033">
    <property type="term" value="C:viral tegument"/>
    <property type="evidence" value="ECO:0007669"/>
    <property type="project" value="UniProtKB-SubCell"/>
</dbReference>
<dbReference type="HAMAP" id="MF_04038">
    <property type="entry name" value="HSV_CEP1"/>
    <property type="match status" value="1"/>
</dbReference>
<dbReference type="InterPro" id="IPR002600">
    <property type="entry name" value="Herpes_UL7"/>
</dbReference>
<dbReference type="Pfam" id="PF01677">
    <property type="entry name" value="Herpes_UL7"/>
    <property type="match status" value="1"/>
</dbReference>
<comment type="function">
    <text evidence="1 2">Plays a critical role in cytoplasmic virus egress. Participates in the final step of tegumentation and envelope acquisition within the host cytoplasm.</text>
</comment>
<comment type="subunit">
    <text evidence="2">Interacts with protein ORF7; this interaction localizes protein ORF53 to the host trans-Golgi network (TGN).</text>
</comment>
<comment type="subcellular location">
    <subcellularLocation>
        <location evidence="1">Virion</location>
    </subcellularLocation>
    <subcellularLocation>
        <location evidence="1">Virion tegument</location>
    </subcellularLocation>
    <subcellularLocation>
        <location evidence="1">Host cytoplasm</location>
    </subcellularLocation>
    <subcellularLocation>
        <location evidence="1 2">Host Golgi apparatus</location>
    </subcellularLocation>
</comment>
<comment type="similarity">
    <text evidence="1">Belongs to the herpesviridae cytoplasmic envelopment protein 1 family.</text>
</comment>
<sequence>MQRIRPYWIKFEQTGGAGMADGMSGINIPSILGCSVTIDNLLTRAEEGLDVSDVIEDLRIQAIPRFVCEAREVTGLKPRFLANSVVSLRVKPEHQETVLVVLNGDSSEVSCDRYYMECVTQPAFRGFIFSVLTAVEDRVYTVGVPPRLLIYRMTLFRPDNVLDFTLCVILMYLEGIGPSGASPSLFVQLSVYLRRVECQIGPLEKMRRFLYEGVLWLLNTLMYVVDNNPFTKTRVLPHYMFVKLLNPQPGTAPNIIKAIYSCGVGQRFDLPHGTPPCPDGVVQVPPGLLNGPLRDSEYQKSVYFWWLNRTMVTPKNVQLFETYKNSPRVVK</sequence>
<gene>
    <name type="primary">ORF53</name>
</gene>
<reference key="1">
    <citation type="journal article" date="1986" name="J. Gen. Virol.">
        <title>The complete DNA sequence of varicella-zoster virus.</title>
        <authorList>
            <person name="Davison A.J."/>
            <person name="Scott J.E."/>
        </authorList>
    </citation>
    <scope>NUCLEOTIDE SEQUENCE [LARGE SCALE GENOMIC DNA]</scope>
</reference>
<reference key="2">
    <citation type="journal article" date="2017" name="Virol. Sin.">
        <title>Varicella-zoster virus ORF7 interacts with ORF53 and plays a role in its trans-Golgi network localization.</title>
        <authorList>
            <person name="Wang W."/>
            <person name="Fu W."/>
            <person name="Pan D."/>
            <person name="Cai L."/>
            <person name="Ye J."/>
            <person name="Liu J."/>
            <person name="Liu C."/>
            <person name="Que Y."/>
            <person name="Xia N."/>
            <person name="Zhu H."/>
            <person name="Cheng T."/>
        </authorList>
    </citation>
    <scope>FUNCTION</scope>
    <scope>INTERACTION WITH PROTEIN ORF7</scope>
    <scope>SUBCELLULAR LOCATION</scope>
</reference>
<proteinExistence type="evidence at protein level"/>
<keyword id="KW-1035">Host cytoplasm</keyword>
<keyword id="KW-1040">Host Golgi apparatus</keyword>
<keyword id="KW-1185">Reference proteome</keyword>
<keyword id="KW-0946">Virion</keyword>
<keyword id="KW-0920">Virion tegument</keyword>
<feature type="chain" id="PRO_0000115921" description="Cytoplasmic envelopment protein 1">
    <location>
        <begin position="1"/>
        <end position="331"/>
    </location>
</feature>
<evidence type="ECO:0000255" key="1">
    <source>
        <dbReference type="HAMAP-Rule" id="MF_04038"/>
    </source>
</evidence>
<evidence type="ECO:0000269" key="2">
    <source>
    </source>
</evidence>
<accession>P09301</accession>